<keyword id="KW-0046">Antibiotic resistance</keyword>
<keyword id="KW-0441">Lipid A biosynthesis</keyword>
<keyword id="KW-0444">Lipid biosynthesis</keyword>
<keyword id="KW-0443">Lipid metabolism</keyword>
<keyword id="KW-0448">Lipopolysaccharide biosynthesis</keyword>
<keyword id="KW-0511">Multifunctional enzyme</keyword>
<keyword id="KW-0520">NAD</keyword>
<keyword id="KW-0560">Oxidoreductase</keyword>
<keyword id="KW-1185">Reference proteome</keyword>
<keyword id="KW-0808">Transferase</keyword>
<protein>
    <recommendedName>
        <fullName>Putative bifunctional polymyxin resistance protein ArnA</fullName>
    </recommendedName>
    <domain>
        <recommendedName>
            <fullName>UDP-4-amino-4-deoxy-L-arabinose formyltransferase</fullName>
            <ecNumber>2.1.2.13</ecNumber>
        </recommendedName>
        <alternativeName>
            <fullName>ArnAFT</fullName>
        </alternativeName>
        <alternativeName>
            <fullName>UDP-L-Ara4N formyltransferase</fullName>
        </alternativeName>
    </domain>
    <domain>
        <recommendedName>
            <fullName>UDP-glucuronic acid oxidase, UDP-4-keto-hexauronic acid decarboxylating</fullName>
            <ecNumber>1.1.1.305</ecNumber>
        </recommendedName>
        <alternativeName>
            <fullName>ArnADH</fullName>
        </alternativeName>
        <alternativeName>
            <fullName>UDP-GlcUA decarboxylase</fullName>
        </alternativeName>
        <alternativeName>
            <fullName>UDP-glucuronic acid dehydrogenase</fullName>
        </alternativeName>
    </domain>
</protein>
<accession>B2TW38</accession>
<gene>
    <name type="primary">arnA</name>
    <name type="ordered locus">SbBS512_E2631</name>
</gene>
<comment type="function">
    <text evidence="1">Bifunctional enzyme that catalyzes the oxidative decarboxylation of UDP-glucuronic acid (UDP-GlcUA) to UDP-4-keto-arabinose (UDP-Ara4O) and the addition of a formyl group to UDP-4-amino-4-deoxy-L-arabinose (UDP-L-Ara4N) to form UDP-L-4-formamido-arabinose (UDP-L-Ara4FN). The modified arabinose is attached to lipid A and is required for resistance to polymyxin and cationic antimicrobial peptides (By similarity).</text>
</comment>
<comment type="catalytic activity">
    <reaction>
        <text>UDP-alpha-D-glucuronate + NAD(+) = UDP-beta-L-threo-pentopyranos-4-ulose + CO2 + NADH</text>
        <dbReference type="Rhea" id="RHEA:24702"/>
        <dbReference type="ChEBI" id="CHEBI:16526"/>
        <dbReference type="ChEBI" id="CHEBI:57540"/>
        <dbReference type="ChEBI" id="CHEBI:57945"/>
        <dbReference type="ChEBI" id="CHEBI:58052"/>
        <dbReference type="ChEBI" id="CHEBI:58710"/>
        <dbReference type="EC" id="1.1.1.305"/>
    </reaction>
</comment>
<comment type="catalytic activity">
    <reaction>
        <text>UDP-4-amino-4-deoxy-beta-L-arabinose + (6R)-10-formyltetrahydrofolate = UDP-4-deoxy-4-formamido-beta-L-arabinose + (6S)-5,6,7,8-tetrahydrofolate + H(+)</text>
        <dbReference type="Rhea" id="RHEA:24706"/>
        <dbReference type="ChEBI" id="CHEBI:15378"/>
        <dbReference type="ChEBI" id="CHEBI:57453"/>
        <dbReference type="ChEBI" id="CHEBI:58708"/>
        <dbReference type="ChEBI" id="CHEBI:58709"/>
        <dbReference type="ChEBI" id="CHEBI:195366"/>
        <dbReference type="EC" id="2.1.2.13"/>
    </reaction>
</comment>
<comment type="pathway">
    <text>Nucleotide-sugar biosynthesis; UDP-4-deoxy-4-formamido-beta-L-arabinose biosynthesis; UDP-4-deoxy-4-formamido-beta-L-arabinose from UDP-alpha-D-glucuronate: step 1/3.</text>
</comment>
<comment type="pathway">
    <text>Nucleotide-sugar biosynthesis; UDP-4-deoxy-4-formamido-beta-L-arabinose biosynthesis; UDP-4-deoxy-4-formamido-beta-L-arabinose from UDP-alpha-D-glucuronate: step 3/3.</text>
</comment>
<comment type="pathway">
    <text>Bacterial outer membrane biogenesis; lipopolysaccharide biosynthesis.</text>
</comment>
<comment type="subunit">
    <text evidence="1">Homohexamer, formed by a dimer of trimers.</text>
</comment>
<comment type="similarity">
    <text evidence="2">In the N-terminal section; belongs to the Fmt family. UDP-L-Ara4N formyltransferase subfamily.</text>
</comment>
<comment type="similarity">
    <text evidence="2">In the C-terminal section; belongs to the NAD(P)-dependent epimerase/dehydratase family. UDP-glucuronic acid decarboxylase subfamily.</text>
</comment>
<comment type="caution">
    <text evidence="2">Could be the product of a pseudogene. The N-terminal region is truncated when compared to orthologs.</text>
</comment>
<evidence type="ECO:0000250" key="1"/>
<evidence type="ECO:0000305" key="2"/>
<reference key="1">
    <citation type="submission" date="2008-05" db="EMBL/GenBank/DDBJ databases">
        <title>Complete sequence of Shigella boydii serotype 18 strain BS512.</title>
        <authorList>
            <person name="Rasko D.A."/>
            <person name="Rosovitz M."/>
            <person name="Maurelli A.T."/>
            <person name="Myers G."/>
            <person name="Seshadri R."/>
            <person name="Cer R."/>
            <person name="Jiang L."/>
            <person name="Ravel J."/>
            <person name="Sebastian Y."/>
        </authorList>
    </citation>
    <scope>NUCLEOTIDE SEQUENCE [LARGE SCALE GENOMIC DNA]</scope>
    <source>
        <strain>CDC 3083-94 / BS512</strain>
    </source>
</reference>
<dbReference type="EC" id="2.1.2.13"/>
<dbReference type="EC" id="1.1.1.305"/>
<dbReference type="EMBL" id="CP001063">
    <property type="protein sequence ID" value="ACD07332.1"/>
    <property type="molecule type" value="Genomic_DNA"/>
</dbReference>
<dbReference type="SMR" id="B2TW38"/>
<dbReference type="STRING" id="344609.SbBS512_E2631"/>
<dbReference type="KEGG" id="sbc:SbBS512_E2631"/>
<dbReference type="HOGENOM" id="CLU_007383_23_2_6"/>
<dbReference type="UniPathway" id="UPA00030"/>
<dbReference type="UniPathway" id="UPA00032">
    <property type="reaction ID" value="UER00492"/>
</dbReference>
<dbReference type="UniPathway" id="UPA00032">
    <property type="reaction ID" value="UER00494"/>
</dbReference>
<dbReference type="Proteomes" id="UP000001030">
    <property type="component" value="Chromosome"/>
</dbReference>
<dbReference type="GO" id="GO:0016020">
    <property type="term" value="C:membrane"/>
    <property type="evidence" value="ECO:0007669"/>
    <property type="project" value="GOC"/>
</dbReference>
<dbReference type="GO" id="GO:0016831">
    <property type="term" value="F:carboxy-lyase activity"/>
    <property type="evidence" value="ECO:0007669"/>
    <property type="project" value="InterPro"/>
</dbReference>
<dbReference type="GO" id="GO:0099619">
    <property type="term" value="F:UDP-4-amino-4-deoxy-L-arabinose formyltransferase activity"/>
    <property type="evidence" value="ECO:0007669"/>
    <property type="project" value="UniProtKB-EC"/>
</dbReference>
<dbReference type="GO" id="GO:0099618">
    <property type="term" value="F:UDP-glucuronate dehydrogenase activity"/>
    <property type="evidence" value="ECO:0007669"/>
    <property type="project" value="UniProtKB-EC"/>
</dbReference>
<dbReference type="GO" id="GO:0009245">
    <property type="term" value="P:lipid A biosynthetic process"/>
    <property type="evidence" value="ECO:0007669"/>
    <property type="project" value="UniProtKB-KW"/>
</dbReference>
<dbReference type="GO" id="GO:0009103">
    <property type="term" value="P:lipopolysaccharide biosynthetic process"/>
    <property type="evidence" value="ECO:0007669"/>
    <property type="project" value="UniProtKB-UniPathway"/>
</dbReference>
<dbReference type="GO" id="GO:0046677">
    <property type="term" value="P:response to antibiotic"/>
    <property type="evidence" value="ECO:0007669"/>
    <property type="project" value="UniProtKB-KW"/>
</dbReference>
<dbReference type="CDD" id="cd08702">
    <property type="entry name" value="Arna_FMT_C"/>
    <property type="match status" value="1"/>
</dbReference>
<dbReference type="CDD" id="cd05257">
    <property type="entry name" value="Arna_like_SDR_e"/>
    <property type="match status" value="1"/>
</dbReference>
<dbReference type="FunFam" id="3.40.50.720:FF:000197">
    <property type="entry name" value="Bifunctional polymyxin resistance protein ArnA"/>
    <property type="match status" value="1"/>
</dbReference>
<dbReference type="Gene3D" id="3.40.50.12230">
    <property type="match status" value="1"/>
</dbReference>
<dbReference type="Gene3D" id="3.40.50.720">
    <property type="entry name" value="NAD(P)-binding Rossmann-like Domain"/>
    <property type="match status" value="1"/>
</dbReference>
<dbReference type="InterPro" id="IPR045869">
    <property type="entry name" value="Arna-like_SDR_e"/>
</dbReference>
<dbReference type="InterPro" id="IPR001509">
    <property type="entry name" value="Epimerase_deHydtase"/>
</dbReference>
<dbReference type="InterPro" id="IPR005793">
    <property type="entry name" value="Formyl_trans_C"/>
</dbReference>
<dbReference type="InterPro" id="IPR036477">
    <property type="entry name" value="Formyl_transf_N_sf"/>
</dbReference>
<dbReference type="InterPro" id="IPR011034">
    <property type="entry name" value="Formyl_transferase-like_C_sf"/>
</dbReference>
<dbReference type="InterPro" id="IPR050177">
    <property type="entry name" value="Lipid_A_modif_metabolic_enz"/>
</dbReference>
<dbReference type="InterPro" id="IPR036291">
    <property type="entry name" value="NAD(P)-bd_dom_sf"/>
</dbReference>
<dbReference type="NCBIfam" id="NF005998">
    <property type="entry name" value="PRK08125.1"/>
    <property type="match status" value="1"/>
</dbReference>
<dbReference type="NCBIfam" id="NF008872">
    <property type="entry name" value="PRK11908.1"/>
    <property type="match status" value="1"/>
</dbReference>
<dbReference type="PANTHER" id="PTHR43245">
    <property type="entry name" value="BIFUNCTIONAL POLYMYXIN RESISTANCE PROTEIN ARNA"/>
    <property type="match status" value="1"/>
</dbReference>
<dbReference type="PANTHER" id="PTHR43245:SF13">
    <property type="entry name" value="UDP-D-APIOSE_UDP-D-XYLOSE SYNTHASE 2"/>
    <property type="match status" value="1"/>
</dbReference>
<dbReference type="Pfam" id="PF01370">
    <property type="entry name" value="Epimerase"/>
    <property type="match status" value="1"/>
</dbReference>
<dbReference type="Pfam" id="PF02911">
    <property type="entry name" value="Formyl_trans_C"/>
    <property type="match status" value="1"/>
</dbReference>
<dbReference type="SUPFAM" id="SSF50486">
    <property type="entry name" value="FMT C-terminal domain-like"/>
    <property type="match status" value="1"/>
</dbReference>
<dbReference type="SUPFAM" id="SSF53328">
    <property type="entry name" value="Formyltransferase"/>
    <property type="match status" value="1"/>
</dbReference>
<dbReference type="SUPFAM" id="SSF51735">
    <property type="entry name" value="NAD(P)-binding Rossmann-fold domains"/>
    <property type="match status" value="1"/>
</dbReference>
<feature type="chain" id="PRO_0000379991" description="Putative bifunctional polymyxin resistance protein ArnA">
    <location>
        <begin position="1"/>
        <end position="526"/>
    </location>
</feature>
<feature type="region of interest" description="Formyltransferase ArnAFT">
    <location>
        <begin position="1"/>
        <end position="170"/>
    </location>
</feature>
<feature type="region of interest" description="Dehydrogenase ArnADH">
    <location>
        <begin position="180"/>
        <end position="526"/>
    </location>
</feature>
<feature type="active site" description="Proton acceptor; for decarboxylase activity" evidence="1">
    <location>
        <position position="300"/>
    </location>
</feature>
<feature type="active site" description="Proton donor; for decarboxylase activity" evidence="1">
    <location>
        <position position="485"/>
    </location>
</feature>
<feature type="binding site" evidence="1">
    <location>
        <begin position="2"/>
        <end position="6"/>
    </location>
    <ligand>
        <name>(6R)-10-formyltetrahydrofolate</name>
        <dbReference type="ChEBI" id="CHEBI:195366"/>
    </ligand>
</feature>
<feature type="binding site" evidence="1">
    <location>
        <position position="213"/>
    </location>
    <ligand>
        <name>NAD(+)</name>
        <dbReference type="ChEBI" id="CHEBI:57540"/>
    </ligand>
</feature>
<feature type="binding site" evidence="1">
    <location>
        <begin position="234"/>
        <end position="235"/>
    </location>
    <ligand>
        <name>NAD(+)</name>
        <dbReference type="ChEBI" id="CHEBI:57540"/>
    </ligand>
</feature>
<feature type="binding site" evidence="1">
    <location>
        <position position="259"/>
    </location>
    <ligand>
        <name>UDP-alpha-D-glucuronate</name>
        <dbReference type="ChEBI" id="CHEBI:58052"/>
    </ligand>
</feature>
<feature type="binding site" evidence="1">
    <location>
        <position position="264"/>
    </location>
    <ligand>
        <name>UDP-alpha-D-glucuronate</name>
        <dbReference type="ChEBI" id="CHEBI:58052"/>
    </ligand>
</feature>
<feature type="binding site" evidence="1">
    <location>
        <begin position="298"/>
        <end position="299"/>
    </location>
    <ligand>
        <name>UDP-alpha-D-glucuronate</name>
        <dbReference type="ChEBI" id="CHEBI:58052"/>
    </ligand>
</feature>
<feature type="binding site" evidence="1">
    <location>
        <position position="326"/>
    </location>
    <ligand>
        <name>UDP-alpha-D-glucuronate</name>
        <dbReference type="ChEBI" id="CHEBI:58052"/>
    </ligand>
</feature>
<feature type="binding site" evidence="1">
    <location>
        <position position="358"/>
    </location>
    <ligand>
        <name>UDP-alpha-D-glucuronate</name>
        <dbReference type="ChEBI" id="CHEBI:58052"/>
    </ligand>
</feature>
<feature type="binding site" evidence="1">
    <location>
        <begin position="392"/>
        <end position="401"/>
    </location>
    <ligand>
        <name>UDP-alpha-D-glucuronate</name>
        <dbReference type="ChEBI" id="CHEBI:58052"/>
    </ligand>
</feature>
<feature type="binding site" evidence="1">
    <location>
        <position position="479"/>
    </location>
    <ligand>
        <name>UDP-alpha-D-glucuronate</name>
        <dbReference type="ChEBI" id="CHEBI:58052"/>
    </ligand>
</feature>
<feature type="site" description="Raises pKa of active site His" evidence="1">
    <location>
        <position position="6"/>
    </location>
</feature>
<name>ARNA_SHIB3</name>
<proteinExistence type="uncertain"/>
<organism>
    <name type="scientific">Shigella boydii serotype 18 (strain CDC 3083-94 / BS512)</name>
    <dbReference type="NCBI Taxonomy" id="344609"/>
    <lineage>
        <taxon>Bacteria</taxon>
        <taxon>Pseudomonadati</taxon>
        <taxon>Pseudomonadota</taxon>
        <taxon>Gammaproteobacteria</taxon>
        <taxon>Enterobacterales</taxon>
        <taxon>Enterobacteriaceae</taxon>
        <taxon>Shigella</taxon>
    </lineage>
</organism>
<sequence>MVKRADAGAIVAQLRVAIAPDDIAITLHHKLCHAARQLLEQTLPAIKHGNILEIAQRENEATCFGRRTPDDSFLEWHKPASVLHNMVRAVADPWPSAFSYVGNQKFTVWSSRVHPHASKAQPGSVISIAPLLIACGDGALEIVTGQAGDGITMQGSQLAQTLGLVQGSRLNSQPACTARRRTRVLILGVNGFIGNHLTERLLREDHYEVYGLDIGSDAISRFLNHPHFHFVEGDISIHSEWIEYHVKKCDVVLPLVAIATPIEYTRNPLRVFELDFEENLRIIRYCVKYRKRIIFPSTSEVYGMCSDKYFDEDHSNLIVGPVNKPRWIYSVSKQLLDRVIWAYGEKEGLQFTLFRPFNWMGPRLDNLNAARIGSSRAITQLILNLVEGSPIKLIDGGKQKRCFTDIRDGIEALYRIIENAGNRCDGEIINIGNPENEASIEELGKMLLASFEKHPLRHHFPPFAGFRVVESSSYYGKGYQDVEHRKPSIRNAHRCLDWEPKIDMQETIDETLDFFLRTVDLTDKPS</sequence>